<protein>
    <recommendedName>
        <fullName>Contactin-5</fullName>
    </recommendedName>
    <alternativeName>
        <fullName>Neural recognition molecule NB-2</fullName>
    </alternativeName>
</protein>
<sequence length="1098" mass="120746">MASCWRLILFLSVTRWLSDYSEALSGLSTSYAALLRIKKSSTSPFGSKSRPRFSSPSLGTISVSPPSWRGAAQQYHSPGNLYHSSDAFRQDESVDYGPVFVQEPDDVIFPTDSDEKKVALNCEVRGNPSPSYRWLRNGTEIALESDYRYSLIDGTFIISNPSELRDSGLYQCLATNSFGSILSREATLQFAYLGNFSGRTRSAVSVREGQGVVLMCSPPPHSPEIIYSWVFNEFPSFVAEDSRRFISQETGNLYISKVQTSDVGSYICLVKNAVTNARVLSPPTPLTLRNDGVMGEYEPKIEVHFPFTVTAAKGTTVKMECFALGNPVPTITWMKVNGYIPSKSRLRKSQAVLEIPNLQLDDAGIYECTAENSRGKNSFRGQLQIFTYPHWVQKLNDTQLDSGSPLQWECKATGKPRPTYRWLKNGAPLLPQSRVDTVNGILAIQSVNQSDAGMYQCLAENKYGAIYASAELKILASPPSFELNQVKKSIIVTKDRGVLIECEPQGSPKPAISWRKGDKAVRANKRIAILPDGSLRILNASKADEGKYICQGVNIFGSAEIIASLSVKEPTRIELTPKRTELTVGESIVLNCKAIHDASLDVTFYWTLKGQPIDFEKEGGHFENIRAQASSADLMIRNILLMHAGRYGCRVQTTADSVSDEAELLVRGPPGPPGVVIVEEITESTATLSWSPATDNHSPISSYNLQARSPFSLGWQTVKTVPEVITGDMESAMAVDLNPWVEYEFRVVATNPIGTGDPSIPSRMIRTNEAVPKTAPSNVSGRSGRRHELVIAWEPVSEEFQNGEGFGYIVAFRPNGTRGWKEKMVTSSEASKFIYRDESVPPLTPFEVKVGVYNNKGDGPFSQIVVICSAEGEPTAAPTDVTATSVSVSEIFVVWKHVKESLGRPQGFEISYWKDTEPEDSVETVRTRGNESFVMLTGLEGNTLYHLTVRAYNGAGYGPPSREASTTTKRHPPREPPGNLRWEQQGSQVSLGWEPVRPLANESEVMGYKVFYRQEGHSEGQVIETQKPQAVVPLPEAGVYIIEVRAYSEGGDGTASSQIRVPSYSGGKITSAQSTLHSLSKWSSVTLLLALMLPSSSW</sequence>
<dbReference type="EMBL" id="AC100491">
    <property type="status" value="NOT_ANNOTATED_CDS"/>
    <property type="molecule type" value="Genomic_DNA"/>
</dbReference>
<dbReference type="EMBL" id="AC102350">
    <property type="status" value="NOT_ANNOTATED_CDS"/>
    <property type="molecule type" value="Genomic_DNA"/>
</dbReference>
<dbReference type="EMBL" id="AC107635">
    <property type="status" value="NOT_ANNOTATED_CDS"/>
    <property type="molecule type" value="Genomic_DNA"/>
</dbReference>
<dbReference type="EMBL" id="AC113470">
    <property type="status" value="NOT_ANNOTATED_CDS"/>
    <property type="molecule type" value="Genomic_DNA"/>
</dbReference>
<dbReference type="EMBL" id="AC117684">
    <property type="status" value="NOT_ANNOTATED_CDS"/>
    <property type="molecule type" value="Genomic_DNA"/>
</dbReference>
<dbReference type="EMBL" id="AC118029">
    <property type="status" value="NOT_ANNOTATED_CDS"/>
    <property type="molecule type" value="Genomic_DNA"/>
</dbReference>
<dbReference type="EMBL" id="AC153417">
    <property type="status" value="NOT_ANNOTATED_CDS"/>
    <property type="molecule type" value="Genomic_DNA"/>
</dbReference>
<dbReference type="EMBL" id="AC154645">
    <property type="status" value="NOT_ANNOTATED_CDS"/>
    <property type="molecule type" value="Genomic_DNA"/>
</dbReference>
<dbReference type="EMBL" id="AC154651">
    <property type="status" value="NOT_ANNOTATED_CDS"/>
    <property type="molecule type" value="Genomic_DNA"/>
</dbReference>
<dbReference type="EMBL" id="CT033779">
    <property type="status" value="NOT_ANNOTATED_CDS"/>
    <property type="molecule type" value="Genomic_DNA"/>
</dbReference>
<dbReference type="CCDS" id="CCDS52722.1"/>
<dbReference type="RefSeq" id="NP_001164258.1">
    <property type="nucleotide sequence ID" value="NM_001170787.1"/>
</dbReference>
<dbReference type="RefSeq" id="XP_006509935.1">
    <property type="nucleotide sequence ID" value="XM_006509872.5"/>
</dbReference>
<dbReference type="RefSeq" id="XP_036010838.1">
    <property type="nucleotide sequence ID" value="XM_036154945.1"/>
</dbReference>
<dbReference type="RefSeq" id="XP_036010839.1">
    <property type="nucleotide sequence ID" value="XM_036154946.1"/>
</dbReference>
<dbReference type="RefSeq" id="XP_036010840.1">
    <property type="nucleotide sequence ID" value="XM_036154947.1"/>
</dbReference>
<dbReference type="RefSeq" id="XP_036010841.1">
    <property type="nucleotide sequence ID" value="XM_036154948.1"/>
</dbReference>
<dbReference type="RefSeq" id="XP_036010842.1">
    <property type="nucleotide sequence ID" value="XM_036154949.1"/>
</dbReference>
<dbReference type="RefSeq" id="XP_036010843.1">
    <property type="nucleotide sequence ID" value="XM_036154950.1"/>
</dbReference>
<dbReference type="RefSeq" id="XP_036010844.1">
    <property type="nucleotide sequence ID" value="XM_036154951.1"/>
</dbReference>
<dbReference type="PDB" id="5E4I">
    <property type="method" value="X-ray"/>
    <property type="resolution" value="2.60 A"/>
    <property type="chains" value="A=96-477"/>
</dbReference>
<dbReference type="PDB" id="7MRN">
    <property type="method" value="X-ray"/>
    <property type="resolution" value="3.50 A"/>
    <property type="chains" value="A/B=669-970"/>
</dbReference>
<dbReference type="PDBsum" id="5E4I"/>
<dbReference type="PDBsum" id="7MRN"/>
<dbReference type="SMR" id="P68500"/>
<dbReference type="FunCoup" id="P68500">
    <property type="interactions" value="290"/>
</dbReference>
<dbReference type="STRING" id="10090.ENSMUSP00000124327"/>
<dbReference type="GlyConnect" id="2228">
    <property type="glycosylation" value="1 N-Linked glycan (1 site)"/>
</dbReference>
<dbReference type="GlyCosmos" id="P68500">
    <property type="glycosylation" value="9 sites, 1 glycan"/>
</dbReference>
<dbReference type="GlyGen" id="P68500">
    <property type="glycosylation" value="10 sites, 4 N-linked glycans (4 sites)"/>
</dbReference>
<dbReference type="iPTMnet" id="P68500"/>
<dbReference type="PhosphoSitePlus" id="P68500"/>
<dbReference type="SwissPalm" id="P68500"/>
<dbReference type="PaxDb" id="10090-ENSMUSP00000124327"/>
<dbReference type="ProteomicsDB" id="283664"/>
<dbReference type="Antibodypedia" id="31696">
    <property type="antibodies" value="164 antibodies from 23 providers"/>
</dbReference>
<dbReference type="Ensembl" id="ENSMUST00000074133.13">
    <property type="protein sequence ID" value="ENSMUSP00000073769.7"/>
    <property type="gene ID" value="ENSMUSG00000039488.16"/>
</dbReference>
<dbReference type="Ensembl" id="ENSMUST00000160216.8">
    <property type="protein sequence ID" value="ENSMUSP00000124327.2"/>
    <property type="gene ID" value="ENSMUSG00000039488.16"/>
</dbReference>
<dbReference type="GeneID" id="244682"/>
<dbReference type="KEGG" id="mmu:244682"/>
<dbReference type="UCSC" id="uc012goa.1">
    <property type="organism name" value="mouse"/>
</dbReference>
<dbReference type="AGR" id="MGI:3042287"/>
<dbReference type="CTD" id="53942"/>
<dbReference type="MGI" id="MGI:3042287">
    <property type="gene designation" value="Cntn5"/>
</dbReference>
<dbReference type="VEuPathDB" id="HostDB:ENSMUSG00000039488"/>
<dbReference type="eggNOG" id="KOG3513">
    <property type="taxonomic scope" value="Eukaryota"/>
</dbReference>
<dbReference type="GeneTree" id="ENSGT00940000158183"/>
<dbReference type="HOGENOM" id="CLU_005756_0_0_1"/>
<dbReference type="InParanoid" id="P68500"/>
<dbReference type="OMA" id="CLTWTVL"/>
<dbReference type="OrthoDB" id="5982258at2759"/>
<dbReference type="PhylomeDB" id="P68500"/>
<dbReference type="TreeFam" id="TF351103"/>
<dbReference type="Reactome" id="R-MMU-163125">
    <property type="pathway name" value="Post-translational modification: synthesis of GPI-anchored proteins"/>
</dbReference>
<dbReference type="BioGRID-ORCS" id="244682">
    <property type="hits" value="4 hits in 76 CRISPR screens"/>
</dbReference>
<dbReference type="ChiTaRS" id="Cntn5">
    <property type="organism name" value="mouse"/>
</dbReference>
<dbReference type="PRO" id="PR:P68500"/>
<dbReference type="Proteomes" id="UP000000589">
    <property type="component" value="Chromosome 9"/>
</dbReference>
<dbReference type="RNAct" id="P68500">
    <property type="molecule type" value="protein"/>
</dbReference>
<dbReference type="Bgee" id="ENSMUSG00000039488">
    <property type="expression patterns" value="Expressed in midbrain and 34 other cell types or tissues"/>
</dbReference>
<dbReference type="ExpressionAtlas" id="P68500">
    <property type="expression patterns" value="baseline and differential"/>
</dbReference>
<dbReference type="GO" id="GO:0098982">
    <property type="term" value="C:GABA-ergic synapse"/>
    <property type="evidence" value="ECO:0000314"/>
    <property type="project" value="SynGO"/>
</dbReference>
<dbReference type="GO" id="GO:0042734">
    <property type="term" value="C:presynaptic membrane"/>
    <property type="evidence" value="ECO:0000314"/>
    <property type="project" value="SynGO"/>
</dbReference>
<dbReference type="GO" id="GO:0098552">
    <property type="term" value="C:side of membrane"/>
    <property type="evidence" value="ECO:0007669"/>
    <property type="project" value="UniProtKB-KW"/>
</dbReference>
<dbReference type="GO" id="GO:0007155">
    <property type="term" value="P:cell adhesion"/>
    <property type="evidence" value="ECO:0007669"/>
    <property type="project" value="UniProtKB-KW"/>
</dbReference>
<dbReference type="GO" id="GO:0099054">
    <property type="term" value="P:presynapse assembly"/>
    <property type="evidence" value="ECO:0000314"/>
    <property type="project" value="SynGO"/>
</dbReference>
<dbReference type="GO" id="GO:0007605">
    <property type="term" value="P:sensory perception of sound"/>
    <property type="evidence" value="ECO:0000315"/>
    <property type="project" value="MGI"/>
</dbReference>
<dbReference type="CDD" id="cd00063">
    <property type="entry name" value="FN3"/>
    <property type="match status" value="4"/>
</dbReference>
<dbReference type="CDD" id="cd04969">
    <property type="entry name" value="Ig5_Contactin"/>
    <property type="match status" value="1"/>
</dbReference>
<dbReference type="FunFam" id="2.60.40.10:FF:000035">
    <property type="entry name" value="Contactin 1"/>
    <property type="match status" value="1"/>
</dbReference>
<dbReference type="FunFam" id="2.60.40.10:FF:000044">
    <property type="entry name" value="Contactin 1"/>
    <property type="match status" value="1"/>
</dbReference>
<dbReference type="FunFam" id="2.60.40.10:FF:000047">
    <property type="entry name" value="Contactin 1"/>
    <property type="match status" value="1"/>
</dbReference>
<dbReference type="FunFam" id="2.60.40.10:FF:000052">
    <property type="entry name" value="Contactin 1"/>
    <property type="match status" value="1"/>
</dbReference>
<dbReference type="FunFam" id="2.60.40.10:FF:000054">
    <property type="entry name" value="Contactin 1"/>
    <property type="match status" value="1"/>
</dbReference>
<dbReference type="FunFam" id="2.60.40.10:FF:000064">
    <property type="entry name" value="Contactin 1"/>
    <property type="match status" value="1"/>
</dbReference>
<dbReference type="FunFam" id="2.60.40.10:FF:000004">
    <property type="entry name" value="DCC isoform 1"/>
    <property type="match status" value="2"/>
</dbReference>
<dbReference type="FunFam" id="2.60.40.10:FF:000005">
    <property type="entry name" value="Neuronal cell adhesion molecule"/>
    <property type="match status" value="1"/>
</dbReference>
<dbReference type="FunFam" id="2.60.40.10:FF:000028">
    <property type="entry name" value="Neuronal cell adhesion molecule"/>
    <property type="match status" value="1"/>
</dbReference>
<dbReference type="Gene3D" id="2.60.40.10">
    <property type="entry name" value="Immunoglobulins"/>
    <property type="match status" value="10"/>
</dbReference>
<dbReference type="InterPro" id="IPR003961">
    <property type="entry name" value="FN3_dom"/>
</dbReference>
<dbReference type="InterPro" id="IPR036116">
    <property type="entry name" value="FN3_sf"/>
</dbReference>
<dbReference type="InterPro" id="IPR007110">
    <property type="entry name" value="Ig-like_dom"/>
</dbReference>
<dbReference type="InterPro" id="IPR036179">
    <property type="entry name" value="Ig-like_dom_sf"/>
</dbReference>
<dbReference type="InterPro" id="IPR013783">
    <property type="entry name" value="Ig-like_fold"/>
</dbReference>
<dbReference type="InterPro" id="IPR013098">
    <property type="entry name" value="Ig_I-set"/>
</dbReference>
<dbReference type="InterPro" id="IPR003599">
    <property type="entry name" value="Ig_sub"/>
</dbReference>
<dbReference type="InterPro" id="IPR003598">
    <property type="entry name" value="Ig_sub2"/>
</dbReference>
<dbReference type="PANTHER" id="PTHR44170:SF17">
    <property type="entry name" value="CONTACTIN-5"/>
    <property type="match status" value="1"/>
</dbReference>
<dbReference type="PANTHER" id="PTHR44170">
    <property type="entry name" value="PROTEIN SIDEKICK"/>
    <property type="match status" value="1"/>
</dbReference>
<dbReference type="Pfam" id="PF00041">
    <property type="entry name" value="fn3"/>
    <property type="match status" value="3"/>
</dbReference>
<dbReference type="Pfam" id="PF07679">
    <property type="entry name" value="I-set"/>
    <property type="match status" value="3"/>
</dbReference>
<dbReference type="Pfam" id="PF13927">
    <property type="entry name" value="Ig_3"/>
    <property type="match status" value="3"/>
</dbReference>
<dbReference type="SMART" id="SM00060">
    <property type="entry name" value="FN3"/>
    <property type="match status" value="4"/>
</dbReference>
<dbReference type="SMART" id="SM00409">
    <property type="entry name" value="IG"/>
    <property type="match status" value="6"/>
</dbReference>
<dbReference type="SMART" id="SM00408">
    <property type="entry name" value="IGc2"/>
    <property type="match status" value="6"/>
</dbReference>
<dbReference type="SUPFAM" id="SSF49265">
    <property type="entry name" value="Fibronectin type III"/>
    <property type="match status" value="2"/>
</dbReference>
<dbReference type="SUPFAM" id="SSF48726">
    <property type="entry name" value="Immunoglobulin"/>
    <property type="match status" value="6"/>
</dbReference>
<dbReference type="PROSITE" id="PS50853">
    <property type="entry name" value="FN3"/>
    <property type="match status" value="4"/>
</dbReference>
<dbReference type="PROSITE" id="PS50835">
    <property type="entry name" value="IG_LIKE"/>
    <property type="match status" value="6"/>
</dbReference>
<name>CNTN5_MOUSE</name>
<proteinExistence type="evidence at protein level"/>
<accession>P68500</accession>
<accession>E0CYC2</accession>
<gene>
    <name type="primary">Cntn5</name>
</gene>
<feature type="signal peptide" evidence="2">
    <location>
        <begin position="1"/>
        <end position="23"/>
    </location>
</feature>
<feature type="chain" id="PRO_0000014719" description="Contactin-5">
    <location>
        <begin position="24"/>
        <end position="1071"/>
    </location>
</feature>
<feature type="propeptide" id="PRO_0000014720" description="Removed in mature form" evidence="2">
    <location>
        <begin position="1072"/>
        <end position="1098"/>
    </location>
</feature>
<feature type="domain" description="Ig-like C2-type 1">
    <location>
        <begin position="98"/>
        <end position="189"/>
    </location>
</feature>
<feature type="domain" description="Ig-like C2-type 2">
    <location>
        <begin position="195"/>
        <end position="281"/>
    </location>
</feature>
<feature type="domain" description="Ig-like C2-type 3">
    <location>
        <begin position="299"/>
        <end position="384"/>
    </location>
</feature>
<feature type="domain" description="Ig-like C2-type 4">
    <location>
        <begin position="389"/>
        <end position="473"/>
    </location>
</feature>
<feature type="domain" description="Ig-like C2-type 5">
    <location>
        <begin position="479"/>
        <end position="568"/>
    </location>
</feature>
<feature type="domain" description="Ig-like C2-type 6">
    <location>
        <begin position="570"/>
        <end position="659"/>
    </location>
</feature>
<feature type="domain" description="Fibronectin type-III 1" evidence="4">
    <location>
        <begin position="672"/>
        <end position="770"/>
    </location>
</feature>
<feature type="domain" description="Fibronectin type-III 2" evidence="4">
    <location>
        <begin position="775"/>
        <end position="872"/>
    </location>
</feature>
<feature type="domain" description="Fibronectin type-III 3" evidence="4">
    <location>
        <begin position="877"/>
        <end position="971"/>
    </location>
</feature>
<feature type="domain" description="Fibronectin type-III 4" evidence="4">
    <location>
        <begin position="976"/>
        <end position="1066"/>
    </location>
</feature>
<feature type="region of interest" description="Disordered" evidence="5">
    <location>
        <begin position="956"/>
        <end position="982"/>
    </location>
</feature>
<feature type="lipid moiety-binding region" description="GPI-anchor amidated serine" evidence="2">
    <location>
        <position position="1071"/>
    </location>
</feature>
<feature type="glycosylation site" description="N-linked (GlcNAc...) asparagine" evidence="2">
    <location>
        <position position="137"/>
    </location>
</feature>
<feature type="glycosylation site" description="N-linked (GlcNAc...) asparagine" evidence="2">
    <location>
        <position position="195"/>
    </location>
</feature>
<feature type="glycosylation site" description="N-linked (GlcNAc...) asparagine" evidence="2">
    <location>
        <position position="396"/>
    </location>
</feature>
<feature type="glycosylation site" description="N-linked (GlcNAc...) asparagine" evidence="2">
    <location>
        <position position="448"/>
    </location>
</feature>
<feature type="glycosylation site" description="N-linked (GlcNAc...) asparagine" evidence="2">
    <location>
        <position position="539"/>
    </location>
</feature>
<feature type="glycosylation site" description="N-linked (GlcNAc...) asparagine" evidence="2">
    <location>
        <position position="778"/>
    </location>
</feature>
<feature type="glycosylation site" description="N-linked (GlcNAc...) asparagine" evidence="2">
    <location>
        <position position="815"/>
    </location>
</feature>
<feature type="glycosylation site" description="N-linked (GlcNAc...) asparagine" evidence="2">
    <location>
        <position position="930"/>
    </location>
</feature>
<feature type="glycosylation site" description="N-linked (GlcNAc...) asparagine" evidence="2">
    <location>
        <position position="1001"/>
    </location>
</feature>
<feature type="disulfide bond" evidence="3">
    <location>
        <begin position="122"/>
        <end position="172"/>
    </location>
</feature>
<feature type="disulfide bond" evidence="3">
    <location>
        <begin position="216"/>
        <end position="268"/>
    </location>
</feature>
<feature type="disulfide bond" evidence="3">
    <location>
        <begin position="321"/>
        <end position="368"/>
    </location>
</feature>
<feature type="disulfide bond" evidence="3">
    <location>
        <begin position="410"/>
        <end position="457"/>
    </location>
</feature>
<feature type="disulfide bond" evidence="3">
    <location>
        <begin position="502"/>
        <end position="550"/>
    </location>
</feature>
<feature type="disulfide bond" evidence="3">
    <location>
        <begin position="592"/>
        <end position="649"/>
    </location>
</feature>
<feature type="strand" evidence="9">
    <location>
        <begin position="96"/>
        <end position="102"/>
    </location>
</feature>
<feature type="strand" evidence="9">
    <location>
        <begin position="107"/>
        <end position="109"/>
    </location>
</feature>
<feature type="strand" evidence="9">
    <location>
        <begin position="117"/>
        <end position="120"/>
    </location>
</feature>
<feature type="strand" evidence="9">
    <location>
        <begin position="123"/>
        <end position="128"/>
    </location>
</feature>
<feature type="strand" evidence="9">
    <location>
        <begin position="131"/>
        <end position="136"/>
    </location>
</feature>
<feature type="helix" evidence="9">
    <location>
        <begin position="143"/>
        <end position="145"/>
    </location>
</feature>
<feature type="strand" evidence="9">
    <location>
        <begin position="149"/>
        <end position="152"/>
    </location>
</feature>
<feature type="strand" evidence="9">
    <location>
        <begin position="155"/>
        <end position="160"/>
    </location>
</feature>
<feature type="helix" evidence="9">
    <location>
        <begin position="163"/>
        <end position="166"/>
    </location>
</feature>
<feature type="strand" evidence="9">
    <location>
        <begin position="168"/>
        <end position="176"/>
    </location>
</feature>
<feature type="strand" evidence="9">
    <location>
        <begin position="179"/>
        <end position="182"/>
    </location>
</feature>
<feature type="strand" evidence="9">
    <location>
        <begin position="186"/>
        <end position="190"/>
    </location>
</feature>
<feature type="strand" evidence="9">
    <location>
        <begin position="204"/>
        <end position="206"/>
    </location>
</feature>
<feature type="strand" evidence="9">
    <location>
        <begin position="212"/>
        <end position="214"/>
    </location>
</feature>
<feature type="strand" evidence="9">
    <location>
        <begin position="225"/>
        <end position="233"/>
    </location>
</feature>
<feature type="strand" evidence="9">
    <location>
        <begin position="241"/>
        <end position="246"/>
    </location>
</feature>
<feature type="turn" evidence="9">
    <location>
        <begin position="248"/>
        <end position="250"/>
    </location>
</feature>
<feature type="strand" evidence="9">
    <location>
        <begin position="253"/>
        <end position="257"/>
    </location>
</feature>
<feature type="helix" evidence="9">
    <location>
        <begin position="260"/>
        <end position="262"/>
    </location>
</feature>
<feature type="strand" evidence="9">
    <location>
        <begin position="264"/>
        <end position="272"/>
    </location>
</feature>
<feature type="turn" evidence="9">
    <location>
        <begin position="273"/>
        <end position="275"/>
    </location>
</feature>
<feature type="strand" evidence="9">
    <location>
        <begin position="278"/>
        <end position="280"/>
    </location>
</feature>
<feature type="strand" evidence="9">
    <location>
        <begin position="284"/>
        <end position="288"/>
    </location>
</feature>
<feature type="strand" evidence="9">
    <location>
        <begin position="297"/>
        <end position="303"/>
    </location>
</feature>
<feature type="strand" evidence="9">
    <location>
        <begin position="307"/>
        <end position="312"/>
    </location>
</feature>
<feature type="strand" evidence="9">
    <location>
        <begin position="317"/>
        <end position="320"/>
    </location>
</feature>
<feature type="strand" evidence="9">
    <location>
        <begin position="322"/>
        <end position="327"/>
    </location>
</feature>
<feature type="strand" evidence="9">
    <location>
        <begin position="330"/>
        <end position="335"/>
    </location>
</feature>
<feature type="strand" evidence="9">
    <location>
        <begin position="345"/>
        <end position="347"/>
    </location>
</feature>
<feature type="turn" evidence="9">
    <location>
        <begin position="348"/>
        <end position="351"/>
    </location>
</feature>
<feature type="strand" evidence="9">
    <location>
        <begin position="352"/>
        <end position="355"/>
    </location>
</feature>
<feature type="helix" evidence="9">
    <location>
        <begin position="360"/>
        <end position="362"/>
    </location>
</feature>
<feature type="strand" evidence="9">
    <location>
        <begin position="364"/>
        <end position="372"/>
    </location>
</feature>
<feature type="strand" evidence="9">
    <location>
        <begin position="375"/>
        <end position="393"/>
    </location>
</feature>
<feature type="strand" evidence="9">
    <location>
        <begin position="398"/>
        <end position="401"/>
    </location>
</feature>
<feature type="strand" evidence="9">
    <location>
        <begin position="406"/>
        <end position="409"/>
    </location>
</feature>
<feature type="strand" evidence="9">
    <location>
        <begin position="411"/>
        <end position="416"/>
    </location>
</feature>
<feature type="strand" evidence="9">
    <location>
        <begin position="419"/>
        <end position="424"/>
    </location>
</feature>
<feature type="strand" evidence="9">
    <location>
        <begin position="431"/>
        <end position="438"/>
    </location>
</feature>
<feature type="strand" evidence="9">
    <location>
        <begin position="441"/>
        <end position="446"/>
    </location>
</feature>
<feature type="helix" evidence="9">
    <location>
        <begin position="449"/>
        <end position="451"/>
    </location>
</feature>
<feature type="strand" evidence="9">
    <location>
        <begin position="453"/>
        <end position="461"/>
    </location>
</feature>
<feature type="strand" evidence="9">
    <location>
        <begin position="464"/>
        <end position="475"/>
    </location>
</feature>
<feature type="strand" evidence="10">
    <location>
        <begin position="675"/>
        <end position="681"/>
    </location>
</feature>
<feature type="strand" evidence="10">
    <location>
        <begin position="686"/>
        <end position="690"/>
    </location>
</feature>
<feature type="strand" evidence="10">
    <location>
        <begin position="702"/>
        <end position="707"/>
    </location>
</feature>
<feature type="strand" evidence="10">
    <location>
        <begin position="712"/>
        <end position="714"/>
    </location>
</feature>
<feature type="strand" evidence="10">
    <location>
        <begin position="720"/>
        <end position="726"/>
    </location>
</feature>
<feature type="strand" evidence="10">
    <location>
        <begin position="731"/>
        <end position="734"/>
    </location>
</feature>
<feature type="strand" evidence="10">
    <location>
        <begin position="745"/>
        <end position="750"/>
    </location>
</feature>
<feature type="strand" evidence="10">
    <location>
        <begin position="788"/>
        <end position="792"/>
    </location>
</feature>
<feature type="helix" evidence="10">
    <location>
        <begin position="798"/>
        <end position="800"/>
    </location>
</feature>
<feature type="strand" evidence="10">
    <location>
        <begin position="803"/>
        <end position="805"/>
    </location>
</feature>
<feature type="strand" evidence="10">
    <location>
        <begin position="807"/>
        <end position="814"/>
    </location>
</feature>
<feature type="strand" evidence="10">
    <location>
        <begin position="818"/>
        <end position="825"/>
    </location>
</feature>
<feature type="strand" evidence="10">
    <location>
        <begin position="832"/>
        <end position="836"/>
    </location>
</feature>
<feature type="strand" evidence="10">
    <location>
        <begin position="845"/>
        <end position="854"/>
    </location>
</feature>
<feature type="strand" evidence="10">
    <location>
        <begin position="857"/>
        <end position="861"/>
    </location>
</feature>
<feature type="strand" evidence="10">
    <location>
        <begin position="865"/>
        <end position="868"/>
    </location>
</feature>
<feature type="strand" evidence="10">
    <location>
        <begin position="882"/>
        <end position="885"/>
    </location>
</feature>
<feature type="strand" evidence="10">
    <location>
        <begin position="887"/>
        <end position="889"/>
    </location>
</feature>
<feature type="strand" evidence="10">
    <location>
        <begin position="891"/>
        <end position="894"/>
    </location>
</feature>
<feature type="strand" evidence="10">
    <location>
        <begin position="906"/>
        <end position="914"/>
    </location>
</feature>
<feature type="strand" evidence="10">
    <location>
        <begin position="923"/>
        <end position="926"/>
    </location>
</feature>
<feature type="strand" evidence="10">
    <location>
        <begin position="928"/>
        <end position="930"/>
    </location>
</feature>
<feature type="strand" evidence="10">
    <location>
        <begin position="932"/>
        <end position="936"/>
    </location>
</feature>
<feature type="strand" evidence="10">
    <location>
        <begin position="944"/>
        <end position="952"/>
    </location>
</feature>
<feature type="strand" evidence="10">
    <location>
        <begin position="964"/>
        <end position="967"/>
    </location>
</feature>
<reference key="1">
    <citation type="journal article" date="2009" name="PLoS Biol.">
        <title>Lineage-specific biology revealed by a finished genome assembly of the mouse.</title>
        <authorList>
            <person name="Church D.M."/>
            <person name="Goodstadt L."/>
            <person name="Hillier L.W."/>
            <person name="Zody M.C."/>
            <person name="Goldstein S."/>
            <person name="She X."/>
            <person name="Bult C.J."/>
            <person name="Agarwala R."/>
            <person name="Cherry J.L."/>
            <person name="DiCuccio M."/>
            <person name="Hlavina W."/>
            <person name="Kapustin Y."/>
            <person name="Meric P."/>
            <person name="Maglott D."/>
            <person name="Birtle Z."/>
            <person name="Marques A.C."/>
            <person name="Graves T."/>
            <person name="Zhou S."/>
            <person name="Teague B."/>
            <person name="Potamousis K."/>
            <person name="Churas C."/>
            <person name="Place M."/>
            <person name="Herschleb J."/>
            <person name="Runnheim R."/>
            <person name="Forrest D."/>
            <person name="Amos-Landgraf J."/>
            <person name="Schwartz D.C."/>
            <person name="Cheng Z."/>
            <person name="Lindblad-Toh K."/>
            <person name="Eichler E.E."/>
            <person name="Ponting C.P."/>
        </authorList>
    </citation>
    <scope>NUCLEOTIDE SEQUENCE [LARGE SCALE GENOMIC DNA]</scope>
    <source>
        <strain>C57BL/6J</strain>
    </source>
</reference>
<reference key="2">
    <citation type="submission" date="2007-04" db="UniProtKB">
        <authorList>
            <person name="Lubec G."/>
            <person name="Kang S.U."/>
        </authorList>
    </citation>
    <scope>PROTEIN SEQUENCE OF 39-48 AND 638-646</scope>
    <scope>IDENTIFICATION BY MASS SPECTROMETRY</scope>
    <source>
        <strain>C57BL/6J</strain>
        <tissue>Brain</tissue>
    </source>
</reference>
<reference key="3">
    <citation type="journal article" date="2003" name="Eur. J. Neurosci.">
        <title>Aberrant responses to acoustic stimuli in mice deficient for neural recognition molecule NB-2.</title>
        <authorList>
            <person name="Li H."/>
            <person name="Takeda Y."/>
            <person name="Niki H."/>
            <person name="Ogawa J."/>
            <person name="Kobayashi S."/>
            <person name="Kai N."/>
            <person name="Akasaka K."/>
            <person name="Asano M."/>
            <person name="Sudo K."/>
            <person name="Iwakura Y."/>
            <person name="Watanabe K."/>
        </authorList>
    </citation>
    <scope>FUNCTION</scope>
    <scope>TISSUE SPECIFICITY</scope>
    <scope>DEVELOPMENTAL STAGE</scope>
</reference>
<reference key="4">
    <citation type="journal article" date="2010" name="Proc. Natl. Acad. Sci. U.S.A.">
        <title>The protein tyrosine phosphatases PTPRZ and PTPRG bind to distinct members of the contactin family of neural recognition molecules.</title>
        <authorList>
            <person name="Bouyain S."/>
            <person name="Watkins D.J."/>
        </authorList>
    </citation>
    <scope>INTERACTION WITH PTPRG</scope>
</reference>
<evidence type="ECO:0000250" key="1"/>
<evidence type="ECO:0000255" key="2"/>
<evidence type="ECO:0000255" key="3">
    <source>
        <dbReference type="PROSITE-ProRule" id="PRU00114"/>
    </source>
</evidence>
<evidence type="ECO:0000255" key="4">
    <source>
        <dbReference type="PROSITE-ProRule" id="PRU00316"/>
    </source>
</evidence>
<evidence type="ECO:0000256" key="5">
    <source>
        <dbReference type="SAM" id="MobiDB-lite"/>
    </source>
</evidence>
<evidence type="ECO:0000269" key="6">
    <source>
    </source>
</evidence>
<evidence type="ECO:0000269" key="7">
    <source>
    </source>
</evidence>
<evidence type="ECO:0000305" key="8"/>
<evidence type="ECO:0007829" key="9">
    <source>
        <dbReference type="PDB" id="5E4I"/>
    </source>
</evidence>
<evidence type="ECO:0007829" key="10">
    <source>
        <dbReference type="PDB" id="7MRN"/>
    </source>
</evidence>
<comment type="function">
    <text evidence="1 6">Contactins mediate cell surface interactions during nervous system development. Has some neurite outgrowth-promoting activity in the cerebral cortical neurons but not in hippocampal neurons (By similarity). Involved in neuronal activity in the auditory system.</text>
</comment>
<comment type="subunit">
    <text evidence="7">Interacts with PTPRG.</text>
</comment>
<comment type="subcellular location">
    <subcellularLocation>
        <location evidence="1">Cell membrane</location>
        <topology evidence="1">Lipid-anchor</topology>
        <topology evidence="1">GPI-anchor</topology>
    </subcellularLocation>
</comment>
<comment type="tissue specificity">
    <text evidence="6">Expressed in the nervous system. Preferentially expressed in the central auditory pathways.</text>
</comment>
<comment type="developmental stage">
    <text evidence="6">Specifically expressed in the postnatal nervous system, reaching a maximum level at 3 weeks postnatal.</text>
</comment>
<comment type="similarity">
    <text evidence="8">Belongs to the immunoglobulin superfamily. Contactin family.</text>
</comment>
<keyword id="KW-0002">3D-structure</keyword>
<keyword id="KW-0130">Cell adhesion</keyword>
<keyword id="KW-1003">Cell membrane</keyword>
<keyword id="KW-0903">Direct protein sequencing</keyword>
<keyword id="KW-1015">Disulfide bond</keyword>
<keyword id="KW-0325">Glycoprotein</keyword>
<keyword id="KW-0336">GPI-anchor</keyword>
<keyword id="KW-0393">Immunoglobulin domain</keyword>
<keyword id="KW-0449">Lipoprotein</keyword>
<keyword id="KW-0472">Membrane</keyword>
<keyword id="KW-1185">Reference proteome</keyword>
<keyword id="KW-0677">Repeat</keyword>
<keyword id="KW-0732">Signal</keyword>
<organism>
    <name type="scientific">Mus musculus</name>
    <name type="common">Mouse</name>
    <dbReference type="NCBI Taxonomy" id="10090"/>
    <lineage>
        <taxon>Eukaryota</taxon>
        <taxon>Metazoa</taxon>
        <taxon>Chordata</taxon>
        <taxon>Craniata</taxon>
        <taxon>Vertebrata</taxon>
        <taxon>Euteleostomi</taxon>
        <taxon>Mammalia</taxon>
        <taxon>Eutheria</taxon>
        <taxon>Euarchontoglires</taxon>
        <taxon>Glires</taxon>
        <taxon>Rodentia</taxon>
        <taxon>Myomorpha</taxon>
        <taxon>Muroidea</taxon>
        <taxon>Muridae</taxon>
        <taxon>Murinae</taxon>
        <taxon>Mus</taxon>
        <taxon>Mus</taxon>
    </lineage>
</organism>